<proteinExistence type="inferred from homology"/>
<sequence>MVVERLQTNLGQQLELLESLKTVVAQEQQLLCSGRIQGIVLQGVTEQKSSILATLAYLDQTRLTTEKNINIQAPYSNVPALAERWQRILELAEGLRYSNLHNGLLLQQHIEHNTQALAVLNTRHGQSLYGPDGHAKGASLLGRKIGI</sequence>
<protein>
    <recommendedName>
        <fullName>Flagella synthesis protein FlgN</fullName>
    </recommendedName>
</protein>
<evidence type="ECO:0000250" key="1"/>
<evidence type="ECO:0000305" key="2"/>
<keyword id="KW-1005">Bacterial flagellum biogenesis</keyword>
<keyword id="KW-0963">Cytoplasm</keyword>
<organism>
    <name type="scientific">Yersinia enterocolitica</name>
    <dbReference type="NCBI Taxonomy" id="630"/>
    <lineage>
        <taxon>Bacteria</taxon>
        <taxon>Pseudomonadati</taxon>
        <taxon>Pseudomonadota</taxon>
        <taxon>Gammaproteobacteria</taxon>
        <taxon>Enterobacterales</taxon>
        <taxon>Yersiniaceae</taxon>
        <taxon>Yersinia</taxon>
    </lineage>
</organism>
<accession>P0C2V4</accession>
<accession>Q56854</accession>
<accession>Q56890</accession>
<comment type="function">
    <text evidence="1">Required for the efficient initiation of filament assembly.</text>
</comment>
<comment type="subcellular location">
    <subcellularLocation>
        <location evidence="2">Cytoplasm</location>
    </subcellularLocation>
</comment>
<comment type="similarity">
    <text evidence="2">Belongs to the FlgN family.</text>
</comment>
<comment type="sequence caution" evidence="2">
    <conflict type="erroneous initiation">
        <sequence resource="EMBL-CDS" id="CAA88189"/>
    </conflict>
</comment>
<name>FLGN_YEREN</name>
<reference key="1">
    <citation type="submission" date="1995-02" db="EMBL/GenBank/DDBJ databases">
        <title>Clustering of flagellar genes around invA, the Yersinia enterocolitica invasin locus.</title>
        <authorList>
            <person name="Fauconnier A."/>
            <person name="Allaoui A."/>
            <person name="van Elsen A."/>
            <person name="Cornelis G.R."/>
            <person name="Bollen A."/>
        </authorList>
    </citation>
    <scope>NUCLEOTIDE SEQUENCE [GENOMIC DNA]</scope>
    <source>
        <strain>W1024 / Serotype O:9</strain>
    </source>
</reference>
<feature type="chain" id="PRO_0000180871" description="Flagella synthesis protein FlgN">
    <location>
        <begin position="1"/>
        <end position="147"/>
    </location>
</feature>
<gene>
    <name type="primary">flgN</name>
</gene>
<dbReference type="EMBL" id="Z48169">
    <property type="protein sequence ID" value="CAA88189.1"/>
    <property type="status" value="ALT_INIT"/>
    <property type="molecule type" value="Genomic_DNA"/>
</dbReference>
<dbReference type="PIR" id="S54217">
    <property type="entry name" value="S54217"/>
</dbReference>
<dbReference type="RefSeq" id="WP_013649699.1">
    <property type="nucleotide sequence ID" value="NZ_UHIX01000001.1"/>
</dbReference>
<dbReference type="SMR" id="P0C2V4"/>
<dbReference type="STRING" id="1443113.LC20_02152"/>
<dbReference type="eggNOG" id="COG3418">
    <property type="taxonomic scope" value="Bacteria"/>
</dbReference>
<dbReference type="GO" id="GO:0005737">
    <property type="term" value="C:cytoplasm"/>
    <property type="evidence" value="ECO:0007669"/>
    <property type="project" value="UniProtKB-SubCell"/>
</dbReference>
<dbReference type="GO" id="GO:0044780">
    <property type="term" value="P:bacterial-type flagellum assembly"/>
    <property type="evidence" value="ECO:0007669"/>
    <property type="project" value="InterPro"/>
</dbReference>
<dbReference type="Gene3D" id="1.20.58.300">
    <property type="entry name" value="FlgN-like"/>
    <property type="match status" value="1"/>
</dbReference>
<dbReference type="InterPro" id="IPR007809">
    <property type="entry name" value="FlgN-like"/>
</dbReference>
<dbReference type="InterPro" id="IPR036679">
    <property type="entry name" value="FlgN-like_sf"/>
</dbReference>
<dbReference type="Pfam" id="PF05130">
    <property type="entry name" value="FlgN"/>
    <property type="match status" value="1"/>
</dbReference>
<dbReference type="SUPFAM" id="SSF140566">
    <property type="entry name" value="FlgN-like"/>
    <property type="match status" value="1"/>
</dbReference>